<name>RPN2_CHICK</name>
<sequence length="36" mass="3927">NAIFSKKNFETLSEAFSVFQTLKYLAILGGVTFLAG</sequence>
<reference key="1">
    <citation type="journal article" date="1994" name="J. Biol. Chem.">
        <title>Purification and characterization of avian oligosaccharyltransferase. Complete amino acid sequence of the 50-kDa subunit.</title>
        <authorList>
            <person name="Kumar V."/>
            <person name="Heinemann F.S."/>
            <person name="Ozols J."/>
        </authorList>
    </citation>
    <scope>PROTEIN SEQUENCE</scope>
    <source>
        <tissue>Oviduct</tissue>
    </source>
</reference>
<gene>
    <name evidence="2" type="primary">RPN2</name>
</gene>
<protein>
    <recommendedName>
        <fullName evidence="2">Dolichyl-diphosphooligosaccharide--protein glycosyltransferase subunit 2</fullName>
    </recommendedName>
    <alternativeName>
        <fullName>Dolichyl-diphosphooligosaccharide--protein glycosyltransferase 65-II kDa subunit</fullName>
    </alternativeName>
    <alternativeName>
        <fullName>Ribophorin II</fullName>
        <shortName>RPN-II</shortName>
    </alternativeName>
    <alternativeName>
        <fullName>Ribophorin-2</fullName>
    </alternativeName>
</protein>
<feature type="chain" id="PRO_0000058092" description="Dolichyl-diphosphooligosaccharide--protein glycosyltransferase subunit 2">
    <location>
        <begin position="1" status="less than"/>
        <end position="36" status="greater than"/>
    </location>
</feature>
<feature type="non-consecutive residues" evidence="3">
    <location>
        <begin position="18"/>
        <end position="19"/>
    </location>
</feature>
<feature type="non-terminal residue">
    <location>
        <position position="1"/>
    </location>
</feature>
<feature type="non-terminal residue">
    <location>
        <position position="36"/>
    </location>
</feature>
<accession>P80897</accession>
<organism>
    <name type="scientific">Gallus gallus</name>
    <name type="common">Chicken</name>
    <dbReference type="NCBI Taxonomy" id="9031"/>
    <lineage>
        <taxon>Eukaryota</taxon>
        <taxon>Metazoa</taxon>
        <taxon>Chordata</taxon>
        <taxon>Craniata</taxon>
        <taxon>Vertebrata</taxon>
        <taxon>Euteleostomi</taxon>
        <taxon>Archelosauria</taxon>
        <taxon>Archosauria</taxon>
        <taxon>Dinosauria</taxon>
        <taxon>Saurischia</taxon>
        <taxon>Theropoda</taxon>
        <taxon>Coelurosauria</taxon>
        <taxon>Aves</taxon>
        <taxon>Neognathae</taxon>
        <taxon>Galloanserae</taxon>
        <taxon>Galliformes</taxon>
        <taxon>Phasianidae</taxon>
        <taxon>Phasianinae</taxon>
        <taxon>Gallus</taxon>
    </lineage>
</organism>
<dbReference type="PIR" id="C54127">
    <property type="entry name" value="C54127"/>
</dbReference>
<dbReference type="SMR" id="P80897"/>
<dbReference type="FunCoup" id="P80897">
    <property type="interactions" value="2232"/>
</dbReference>
<dbReference type="eggNOG" id="KOG2447">
    <property type="taxonomic scope" value="Eukaryota"/>
</dbReference>
<dbReference type="InParanoid" id="P80897"/>
<dbReference type="OrthoDB" id="432292at2759"/>
<dbReference type="UniPathway" id="UPA00378"/>
<dbReference type="Proteomes" id="UP000000539">
    <property type="component" value="Unassembled WGS sequence"/>
</dbReference>
<dbReference type="GO" id="GO:0005789">
    <property type="term" value="C:endoplasmic reticulum membrane"/>
    <property type="evidence" value="ECO:0007669"/>
    <property type="project" value="UniProtKB-SubCell"/>
</dbReference>
<dbReference type="GO" id="GO:0006486">
    <property type="term" value="P:protein glycosylation"/>
    <property type="evidence" value="ECO:0007669"/>
    <property type="project" value="UniProtKB-UniPathway"/>
</dbReference>
<proteinExistence type="evidence at protein level"/>
<evidence type="ECO:0000250" key="1">
    <source>
        <dbReference type="UniProtKB" id="F1PCT7"/>
    </source>
</evidence>
<evidence type="ECO:0000250" key="2">
    <source>
        <dbReference type="UniProtKB" id="P04844"/>
    </source>
</evidence>
<evidence type="ECO:0000305" key="3"/>
<comment type="function">
    <text evidence="1">Subunit of the oligosaccharyl transferase (OST) complex that catalyzes the initial transfer of a defined glycan (Glc(3)Man(9)GlcNAc(2) in eukaryotes) from the lipid carrier dolichol-pyrophosphate to an asparagine residue within an Asn-X-Ser/Thr consensus motif in nascent polypeptide chains, the first step in protein N-glycosylation. N-glycosylation occurs cotranslationally and the complex associates with the Sec61 complex at the channel-forming translocon complex that mediates protein translocation across the endoplasmic reticulum (ER). All subunits are required for a maximal enzyme activity.</text>
</comment>
<comment type="pathway">
    <text evidence="2">Protein modification; protein glycosylation.</text>
</comment>
<comment type="subunit">
    <text evidence="1">Component of the oligosaccharyltransferase (OST) complex.</text>
</comment>
<comment type="subcellular location">
    <subcellularLocation>
        <location evidence="1">Endoplasmic reticulum</location>
    </subcellularLocation>
    <subcellularLocation>
        <location>Endoplasmic reticulum membrane</location>
        <topology evidence="3">Multi-pass membrane protein</topology>
    </subcellularLocation>
</comment>
<comment type="similarity">
    <text evidence="3">Belongs to the SWP1 family.</text>
</comment>
<keyword id="KW-0903">Direct protein sequencing</keyword>
<keyword id="KW-0256">Endoplasmic reticulum</keyword>
<keyword id="KW-0472">Membrane</keyword>
<keyword id="KW-1185">Reference proteome</keyword>
<keyword id="KW-0812">Transmembrane</keyword>